<comment type="subcellular location">
    <subcellularLocation>
        <location evidence="1">Cell membrane</location>
        <topology evidence="1">Lipid-anchor</topology>
    </subcellularLocation>
</comment>
<comment type="similarity">
    <text evidence="2">Belongs to the staphylococcal tandem lipoprotein family.</text>
</comment>
<name>Y093_STAAN</name>
<organism>
    <name type="scientific">Staphylococcus aureus (strain N315)</name>
    <dbReference type="NCBI Taxonomy" id="158879"/>
    <lineage>
        <taxon>Bacteria</taxon>
        <taxon>Bacillati</taxon>
        <taxon>Bacillota</taxon>
        <taxon>Bacilli</taxon>
        <taxon>Bacillales</taxon>
        <taxon>Staphylococcaceae</taxon>
        <taxon>Staphylococcus</taxon>
    </lineage>
</organism>
<protein>
    <recommendedName>
        <fullName>Uncharacterized lipoprotein SA0093</fullName>
    </recommendedName>
</protein>
<dbReference type="EMBL" id="BA000018">
    <property type="protein sequence ID" value="BAB41312.1"/>
    <property type="molecule type" value="Genomic_DNA"/>
</dbReference>
<dbReference type="PIR" id="E89769">
    <property type="entry name" value="E89769"/>
</dbReference>
<dbReference type="RefSeq" id="WP_000597207.1">
    <property type="nucleotide sequence ID" value="NC_002745.2"/>
</dbReference>
<dbReference type="SMR" id="Q7A886"/>
<dbReference type="EnsemblBacteria" id="BAB41312">
    <property type="protein sequence ID" value="BAB41312"/>
    <property type="gene ID" value="BAB41312"/>
</dbReference>
<dbReference type="KEGG" id="sau:SA0093"/>
<dbReference type="HOGENOM" id="CLU_071589_0_1_9"/>
<dbReference type="GO" id="GO:0005886">
    <property type="term" value="C:plasma membrane"/>
    <property type="evidence" value="ECO:0007669"/>
    <property type="project" value="UniProtKB-SubCell"/>
</dbReference>
<dbReference type="Gene3D" id="2.50.20.40">
    <property type="match status" value="1"/>
</dbReference>
<dbReference type="InterPro" id="IPR007595">
    <property type="entry name" value="Csa"/>
</dbReference>
<dbReference type="InterPro" id="IPR038641">
    <property type="entry name" value="Csa_sf"/>
</dbReference>
<dbReference type="NCBIfam" id="TIGR01742">
    <property type="entry name" value="SA_tandem_lipo"/>
    <property type="match status" value="1"/>
</dbReference>
<dbReference type="Pfam" id="PF04507">
    <property type="entry name" value="DUF576"/>
    <property type="match status" value="1"/>
</dbReference>
<dbReference type="PROSITE" id="PS51257">
    <property type="entry name" value="PROKAR_LIPOPROTEIN"/>
    <property type="match status" value="1"/>
</dbReference>
<feature type="signal peptide" evidence="1">
    <location>
        <begin position="1"/>
        <end position="24"/>
    </location>
</feature>
<feature type="chain" id="PRO_0000282133" description="Uncharacterized lipoprotein SA0093">
    <location>
        <begin position="25"/>
        <end position="256"/>
    </location>
</feature>
<feature type="lipid moiety-binding region" description="N-palmitoyl cysteine" evidence="1">
    <location>
        <position position="25"/>
    </location>
</feature>
<feature type="lipid moiety-binding region" description="S-diacylglycerol cysteine" evidence="1">
    <location>
        <position position="25"/>
    </location>
</feature>
<reference key="1">
    <citation type="journal article" date="2001" name="Lancet">
        <title>Whole genome sequencing of meticillin-resistant Staphylococcus aureus.</title>
        <authorList>
            <person name="Kuroda M."/>
            <person name="Ohta T."/>
            <person name="Uchiyama I."/>
            <person name="Baba T."/>
            <person name="Yuzawa H."/>
            <person name="Kobayashi I."/>
            <person name="Cui L."/>
            <person name="Oguchi A."/>
            <person name="Aoki K."/>
            <person name="Nagai Y."/>
            <person name="Lian J.-Q."/>
            <person name="Ito T."/>
            <person name="Kanamori M."/>
            <person name="Matsumaru H."/>
            <person name="Maruyama A."/>
            <person name="Murakami H."/>
            <person name="Hosoyama A."/>
            <person name="Mizutani-Ui Y."/>
            <person name="Takahashi N.K."/>
            <person name="Sawano T."/>
            <person name="Inoue R."/>
            <person name="Kaito C."/>
            <person name="Sekimizu K."/>
            <person name="Hirakawa H."/>
            <person name="Kuhara S."/>
            <person name="Goto S."/>
            <person name="Yabuzaki J."/>
            <person name="Kanehisa M."/>
            <person name="Yamashita A."/>
            <person name="Oshima K."/>
            <person name="Furuya K."/>
            <person name="Yoshino C."/>
            <person name="Shiba T."/>
            <person name="Hattori M."/>
            <person name="Ogasawara N."/>
            <person name="Hayashi H."/>
            <person name="Hiramatsu K."/>
        </authorList>
    </citation>
    <scope>NUCLEOTIDE SEQUENCE [LARGE SCALE GENOMIC DNA]</scope>
    <source>
        <strain>N315</strain>
    </source>
</reference>
<proteinExistence type="inferred from homology"/>
<gene>
    <name type="ordered locus">SA0093</name>
</gene>
<sequence>MIKRVNKLVLGISFLFLIISIFAGCGTGKEAEIKKSFEKTLSMYPIKNLEDLYDKEGYRDDQFDKNDKGTWIVRSSMSIQSNGKDMNIKGMVLYMNRNTRTTNGYYYVDVIEREDKGIHRDNEKRYPVKMVDNKIIPTKEIKDEKIKKEIENFKFFVQYGDFKDLSKYKDGDISYNPEVPSYSAKYQLTNDDYNVKQLRKRYNIPTNKAPKLLLKGTGNLKGSSIGYKKIEFTFVEKKGENIYFSDGLHFNPSEDK</sequence>
<keyword id="KW-1003">Cell membrane</keyword>
<keyword id="KW-0449">Lipoprotein</keyword>
<keyword id="KW-0472">Membrane</keyword>
<keyword id="KW-0564">Palmitate</keyword>
<keyword id="KW-0732">Signal</keyword>
<evidence type="ECO:0000255" key="1">
    <source>
        <dbReference type="PROSITE-ProRule" id="PRU00303"/>
    </source>
</evidence>
<evidence type="ECO:0000305" key="2"/>
<accession>Q7A886</accession>